<reference key="1">
    <citation type="journal article" date="2001" name="Nucleic Acids Res.">
        <title>The complete genome sequence of the murine respiratory pathogen Mycoplasma pulmonis.</title>
        <authorList>
            <person name="Chambaud I."/>
            <person name="Heilig R."/>
            <person name="Ferris S."/>
            <person name="Barbe V."/>
            <person name="Samson D."/>
            <person name="Galisson F."/>
            <person name="Moszer I."/>
            <person name="Dybvig K."/>
            <person name="Wroblewski H."/>
            <person name="Viari A."/>
            <person name="Rocha E.P.C."/>
            <person name="Blanchard A."/>
        </authorList>
    </citation>
    <scope>NUCLEOTIDE SEQUENCE [LARGE SCALE GENOMIC DNA]</scope>
    <source>
        <strain>UAB CTIP</strain>
    </source>
</reference>
<organism>
    <name type="scientific">Mycoplasmopsis pulmonis (strain UAB CTIP)</name>
    <name type="common">Mycoplasma pulmonis</name>
    <dbReference type="NCBI Taxonomy" id="272635"/>
    <lineage>
        <taxon>Bacteria</taxon>
        <taxon>Bacillati</taxon>
        <taxon>Mycoplasmatota</taxon>
        <taxon>Mycoplasmoidales</taxon>
        <taxon>Metamycoplasmataceae</taxon>
        <taxon>Mycoplasmopsis</taxon>
    </lineage>
</organism>
<name>METK_MYCPU</name>
<evidence type="ECO:0000255" key="1">
    <source>
        <dbReference type="HAMAP-Rule" id="MF_00086"/>
    </source>
</evidence>
<protein>
    <recommendedName>
        <fullName evidence="1">S-adenosylmethionine synthase</fullName>
        <shortName evidence="1">AdoMet synthase</shortName>
        <ecNumber evidence="1">2.5.1.6</ecNumber>
    </recommendedName>
    <alternativeName>
        <fullName evidence="1">MAT</fullName>
    </alternativeName>
    <alternativeName>
        <fullName evidence="1">Methionine adenosyltransferase</fullName>
    </alternativeName>
</protein>
<dbReference type="EC" id="2.5.1.6" evidence="1"/>
<dbReference type="EMBL" id="AL445565">
    <property type="protein sequence ID" value="CAC13875.1"/>
    <property type="molecule type" value="Genomic_DNA"/>
</dbReference>
<dbReference type="PIR" id="F90599">
    <property type="entry name" value="F90599"/>
</dbReference>
<dbReference type="RefSeq" id="WP_010925503.1">
    <property type="nucleotide sequence ID" value="NC_002771.1"/>
</dbReference>
<dbReference type="SMR" id="Q98PM0"/>
<dbReference type="STRING" id="272635.gene:17577313"/>
<dbReference type="KEGG" id="mpu:MYPU_7020"/>
<dbReference type="eggNOG" id="COG0192">
    <property type="taxonomic scope" value="Bacteria"/>
</dbReference>
<dbReference type="HOGENOM" id="CLU_041802_1_1_14"/>
<dbReference type="BioCyc" id="MPUL272635:G1GT6-715-MONOMER"/>
<dbReference type="UniPathway" id="UPA00315">
    <property type="reaction ID" value="UER00080"/>
</dbReference>
<dbReference type="Proteomes" id="UP000000528">
    <property type="component" value="Chromosome"/>
</dbReference>
<dbReference type="GO" id="GO:0005737">
    <property type="term" value="C:cytoplasm"/>
    <property type="evidence" value="ECO:0007669"/>
    <property type="project" value="UniProtKB-SubCell"/>
</dbReference>
<dbReference type="GO" id="GO:0005524">
    <property type="term" value="F:ATP binding"/>
    <property type="evidence" value="ECO:0007669"/>
    <property type="project" value="UniProtKB-UniRule"/>
</dbReference>
<dbReference type="GO" id="GO:0000287">
    <property type="term" value="F:magnesium ion binding"/>
    <property type="evidence" value="ECO:0007669"/>
    <property type="project" value="UniProtKB-UniRule"/>
</dbReference>
<dbReference type="GO" id="GO:0004478">
    <property type="term" value="F:methionine adenosyltransferase activity"/>
    <property type="evidence" value="ECO:0007669"/>
    <property type="project" value="UniProtKB-UniRule"/>
</dbReference>
<dbReference type="GO" id="GO:0006730">
    <property type="term" value="P:one-carbon metabolic process"/>
    <property type="evidence" value="ECO:0007669"/>
    <property type="project" value="UniProtKB-KW"/>
</dbReference>
<dbReference type="GO" id="GO:0006556">
    <property type="term" value="P:S-adenosylmethionine biosynthetic process"/>
    <property type="evidence" value="ECO:0007669"/>
    <property type="project" value="UniProtKB-UniRule"/>
</dbReference>
<dbReference type="CDD" id="cd18079">
    <property type="entry name" value="S-AdoMet_synt"/>
    <property type="match status" value="1"/>
</dbReference>
<dbReference type="FunFam" id="3.30.300.10:FF:000003">
    <property type="entry name" value="S-adenosylmethionine synthase"/>
    <property type="match status" value="1"/>
</dbReference>
<dbReference type="Gene3D" id="3.30.300.10">
    <property type="match status" value="3"/>
</dbReference>
<dbReference type="HAMAP" id="MF_00086">
    <property type="entry name" value="S_AdoMet_synth1"/>
    <property type="match status" value="1"/>
</dbReference>
<dbReference type="InterPro" id="IPR022631">
    <property type="entry name" value="ADOMET_SYNTHASE_CS"/>
</dbReference>
<dbReference type="InterPro" id="IPR022630">
    <property type="entry name" value="S-AdoMet_synt_C"/>
</dbReference>
<dbReference type="InterPro" id="IPR022629">
    <property type="entry name" value="S-AdoMet_synt_central"/>
</dbReference>
<dbReference type="InterPro" id="IPR022628">
    <property type="entry name" value="S-AdoMet_synt_N"/>
</dbReference>
<dbReference type="InterPro" id="IPR002133">
    <property type="entry name" value="S-AdoMet_synthetase"/>
</dbReference>
<dbReference type="InterPro" id="IPR022636">
    <property type="entry name" value="S-AdoMet_synthetase_sfam"/>
</dbReference>
<dbReference type="NCBIfam" id="TIGR01034">
    <property type="entry name" value="metK"/>
    <property type="match status" value="1"/>
</dbReference>
<dbReference type="PANTHER" id="PTHR11964">
    <property type="entry name" value="S-ADENOSYLMETHIONINE SYNTHETASE"/>
    <property type="match status" value="1"/>
</dbReference>
<dbReference type="Pfam" id="PF02773">
    <property type="entry name" value="S-AdoMet_synt_C"/>
    <property type="match status" value="1"/>
</dbReference>
<dbReference type="Pfam" id="PF02772">
    <property type="entry name" value="S-AdoMet_synt_M"/>
    <property type="match status" value="1"/>
</dbReference>
<dbReference type="Pfam" id="PF00438">
    <property type="entry name" value="S-AdoMet_synt_N"/>
    <property type="match status" value="1"/>
</dbReference>
<dbReference type="PIRSF" id="PIRSF000497">
    <property type="entry name" value="MAT"/>
    <property type="match status" value="1"/>
</dbReference>
<dbReference type="SUPFAM" id="SSF55973">
    <property type="entry name" value="S-adenosylmethionine synthetase"/>
    <property type="match status" value="3"/>
</dbReference>
<dbReference type="PROSITE" id="PS00376">
    <property type="entry name" value="ADOMET_SYNTHASE_1"/>
    <property type="match status" value="1"/>
</dbReference>
<dbReference type="PROSITE" id="PS00377">
    <property type="entry name" value="ADOMET_SYNTHASE_2"/>
    <property type="match status" value="1"/>
</dbReference>
<proteinExistence type="inferred from homology"/>
<accession>Q98PM0</accession>
<feature type="chain" id="PRO_0000174554" description="S-adenosylmethionine synthase">
    <location>
        <begin position="1"/>
        <end position="376"/>
    </location>
</feature>
<feature type="region of interest" description="Flexible loop" evidence="1">
    <location>
        <begin position="92"/>
        <end position="102"/>
    </location>
</feature>
<feature type="binding site" description="in other chain" evidence="1">
    <location>
        <position position="15"/>
    </location>
    <ligand>
        <name>ATP</name>
        <dbReference type="ChEBI" id="CHEBI:30616"/>
        <note>ligand shared between two neighboring subunits</note>
    </ligand>
</feature>
<feature type="binding site" evidence="1">
    <location>
        <position position="17"/>
    </location>
    <ligand>
        <name>Mg(2+)</name>
        <dbReference type="ChEBI" id="CHEBI:18420"/>
    </ligand>
</feature>
<feature type="binding site" evidence="1">
    <location>
        <position position="43"/>
    </location>
    <ligand>
        <name>K(+)</name>
        <dbReference type="ChEBI" id="CHEBI:29103"/>
    </ligand>
</feature>
<feature type="binding site" description="in other chain" evidence="1">
    <location>
        <position position="56"/>
    </location>
    <ligand>
        <name>L-methionine</name>
        <dbReference type="ChEBI" id="CHEBI:57844"/>
        <note>ligand shared between two neighboring subunits</note>
    </ligand>
</feature>
<feature type="binding site" description="in other chain" evidence="1">
    <location>
        <position position="92"/>
    </location>
    <ligand>
        <name>L-methionine</name>
        <dbReference type="ChEBI" id="CHEBI:57844"/>
        <note>ligand shared between two neighboring subunits</note>
    </ligand>
</feature>
<feature type="binding site" description="in other chain" evidence="1">
    <location>
        <begin position="156"/>
        <end position="158"/>
    </location>
    <ligand>
        <name>ATP</name>
        <dbReference type="ChEBI" id="CHEBI:30616"/>
        <note>ligand shared between two neighboring subunits</note>
    </ligand>
</feature>
<feature type="binding site" evidence="1">
    <location>
        <position position="231"/>
    </location>
    <ligand>
        <name>ATP</name>
        <dbReference type="ChEBI" id="CHEBI:30616"/>
        <note>ligand shared between two neighboring subunits</note>
    </ligand>
</feature>
<feature type="binding site" evidence="1">
    <location>
        <position position="231"/>
    </location>
    <ligand>
        <name>L-methionine</name>
        <dbReference type="ChEBI" id="CHEBI:57844"/>
        <note>ligand shared between two neighboring subunits</note>
    </ligand>
</feature>
<feature type="binding site" description="in other chain" evidence="1">
    <location>
        <begin position="237"/>
        <end position="238"/>
    </location>
    <ligand>
        <name>ATP</name>
        <dbReference type="ChEBI" id="CHEBI:30616"/>
        <note>ligand shared between two neighboring subunits</note>
    </ligand>
</feature>
<feature type="binding site" evidence="1">
    <location>
        <position position="254"/>
    </location>
    <ligand>
        <name>ATP</name>
        <dbReference type="ChEBI" id="CHEBI:30616"/>
        <note>ligand shared between two neighboring subunits</note>
    </ligand>
</feature>
<feature type="binding site" evidence="1">
    <location>
        <position position="258"/>
    </location>
    <ligand>
        <name>ATP</name>
        <dbReference type="ChEBI" id="CHEBI:30616"/>
        <note>ligand shared between two neighboring subunits</note>
    </ligand>
</feature>
<feature type="binding site" description="in other chain" evidence="1">
    <location>
        <position position="262"/>
    </location>
    <ligand>
        <name>L-methionine</name>
        <dbReference type="ChEBI" id="CHEBI:57844"/>
        <note>ligand shared between two neighboring subunits</note>
    </ligand>
</feature>
<comment type="function">
    <text evidence="1">Catalyzes the formation of S-adenosylmethionine (AdoMet) from methionine and ATP. The overall synthetic reaction is composed of two sequential steps, AdoMet formation and the subsequent tripolyphosphate hydrolysis which occurs prior to release of AdoMet from the enzyme.</text>
</comment>
<comment type="catalytic activity">
    <reaction evidence="1">
        <text>L-methionine + ATP + H2O = S-adenosyl-L-methionine + phosphate + diphosphate</text>
        <dbReference type="Rhea" id="RHEA:21080"/>
        <dbReference type="ChEBI" id="CHEBI:15377"/>
        <dbReference type="ChEBI" id="CHEBI:30616"/>
        <dbReference type="ChEBI" id="CHEBI:33019"/>
        <dbReference type="ChEBI" id="CHEBI:43474"/>
        <dbReference type="ChEBI" id="CHEBI:57844"/>
        <dbReference type="ChEBI" id="CHEBI:59789"/>
        <dbReference type="EC" id="2.5.1.6"/>
    </reaction>
</comment>
<comment type="cofactor">
    <cofactor evidence="1">
        <name>Mg(2+)</name>
        <dbReference type="ChEBI" id="CHEBI:18420"/>
    </cofactor>
    <text evidence="1">Binds 2 divalent ions per subunit.</text>
</comment>
<comment type="cofactor">
    <cofactor evidence="1">
        <name>K(+)</name>
        <dbReference type="ChEBI" id="CHEBI:29103"/>
    </cofactor>
    <text evidence="1">Binds 1 potassium ion per subunit.</text>
</comment>
<comment type="pathway">
    <text evidence="1">Amino-acid biosynthesis; S-adenosyl-L-methionine biosynthesis; S-adenosyl-L-methionine from L-methionine: step 1/1.</text>
</comment>
<comment type="subunit">
    <text evidence="1">Homotetramer; dimer of dimers.</text>
</comment>
<comment type="subcellular location">
    <subcellularLocation>
        <location evidence="1">Cytoplasm</location>
    </subcellularLocation>
</comment>
<comment type="similarity">
    <text evidence="1">Belongs to the AdoMet synthase family.</text>
</comment>
<gene>
    <name evidence="1" type="primary">metK</name>
    <name type="ordered locus">MYPU_7020</name>
</gene>
<sequence length="376" mass="41862">MQKNLFTSESVGRGHPDKICDQISDSILDAVLKIDPNSRCAIEVMASNRLIIIGGEITTQGYVDLVSKSWEILISLGYTENDFTIISNVNEQSKEIANQVDRQDDNIGAGDQGIMFGFASDETKSFMPLAISIAHDLVKRAEKLRVENKINGLKSDMKSQVTIDYSDQKNPKIDTILMSLQHDKDVLLDNFRNDVKKLIIEPVVNDYNLNSNYKCFINPNGSFSIGGPIGDTGLTGRKIIVDTYGGAAHHGGGAFSGKDYTKVDRSAAYMARYIAKNLVAAKVAKKLEIQLSYGIGMIEPISINVNSFGTSKFSDLEITDFIRNNFSLSPKSIIEKLNLKNTKYFPTSFFGHFGRDDLDLPWEKLDQVDKIKKFFK</sequence>
<keyword id="KW-0067">ATP-binding</keyword>
<keyword id="KW-0963">Cytoplasm</keyword>
<keyword id="KW-0460">Magnesium</keyword>
<keyword id="KW-0479">Metal-binding</keyword>
<keyword id="KW-0547">Nucleotide-binding</keyword>
<keyword id="KW-0554">One-carbon metabolism</keyword>
<keyword id="KW-0630">Potassium</keyword>
<keyword id="KW-1185">Reference proteome</keyword>
<keyword id="KW-0808">Transferase</keyword>